<name>CYB_HYLMG</name>
<comment type="function">
    <text evidence="2">Component of the ubiquinol-cytochrome c reductase complex (complex III or cytochrome b-c1 complex) that is part of the mitochondrial respiratory chain. The b-c1 complex mediates electron transfer from ubiquinol to cytochrome c. Contributes to the generation of a proton gradient across the mitochondrial membrane that is then used for ATP synthesis.</text>
</comment>
<comment type="cofactor">
    <cofactor evidence="2">
        <name>heme b</name>
        <dbReference type="ChEBI" id="CHEBI:60344"/>
    </cofactor>
    <text evidence="2">Binds 2 heme b groups non-covalently.</text>
</comment>
<comment type="subunit">
    <text evidence="2">The cytochrome bc1 complex contains 11 subunits: 3 respiratory subunits (MT-CYB, CYC1 and UQCRFS1), 2 core proteins (UQCRC1 and UQCRC2) and 6 low-molecular weight proteins (UQCRH/QCR6, UQCRB/QCR7, UQCRQ/QCR8, UQCR10/QCR9, UQCR11/QCR10 and a cleavage product of UQCRFS1). This cytochrome bc1 complex then forms a dimer.</text>
</comment>
<comment type="subcellular location">
    <subcellularLocation>
        <location evidence="2">Mitochondrion inner membrane</location>
        <topology evidence="2">Multi-pass membrane protein</topology>
    </subcellularLocation>
</comment>
<comment type="miscellaneous">
    <text evidence="1">Heme 1 (or BL or b562) is low-potential and absorbs at about 562 nm, and heme 2 (or BH or b566) is high-potential and absorbs at about 566 nm.</text>
</comment>
<comment type="similarity">
    <text evidence="3 4">Belongs to the cytochrome b family.</text>
</comment>
<comment type="caution">
    <text evidence="2">The full-length protein contains only eight transmembrane helices, not nine as predicted by bioinformatics tools.</text>
</comment>
<evidence type="ECO:0000250" key="1"/>
<evidence type="ECO:0000250" key="2">
    <source>
        <dbReference type="UniProtKB" id="P00157"/>
    </source>
</evidence>
<evidence type="ECO:0000255" key="3">
    <source>
        <dbReference type="PROSITE-ProRule" id="PRU00967"/>
    </source>
</evidence>
<evidence type="ECO:0000255" key="4">
    <source>
        <dbReference type="PROSITE-ProRule" id="PRU00968"/>
    </source>
</evidence>
<gene>
    <name type="primary">MT-CYB</name>
    <name type="synonym">COB</name>
    <name type="synonym">CYTB</name>
    <name type="synonym">MTCYB</name>
</gene>
<organism>
    <name type="scientific">Hylaeamys megacephalus</name>
    <name type="common">Large-headed rice rat</name>
    <name type="synonym">Oryzomys megacephalus</name>
    <dbReference type="NCBI Taxonomy" id="89099"/>
    <lineage>
        <taxon>Eukaryota</taxon>
        <taxon>Metazoa</taxon>
        <taxon>Chordata</taxon>
        <taxon>Craniata</taxon>
        <taxon>Vertebrata</taxon>
        <taxon>Euteleostomi</taxon>
        <taxon>Mammalia</taxon>
        <taxon>Eutheria</taxon>
        <taxon>Euarchontoglires</taxon>
        <taxon>Glires</taxon>
        <taxon>Rodentia</taxon>
        <taxon>Myomorpha</taxon>
        <taxon>Muroidea</taxon>
        <taxon>Cricetidae</taxon>
        <taxon>Sigmodontinae</taxon>
        <taxon>Hylaeamys</taxon>
    </lineage>
</organism>
<reference key="1">
    <citation type="journal article" date="1999" name="J. Mammal. Evol.">
        <title>Phylogenetic relationships and the radiation of Sigmodontine rodents in South America: evidence from cytochrome b.</title>
        <authorList>
            <person name="Smith M.F."/>
            <person name="Patton J.L."/>
        </authorList>
    </citation>
    <scope>NUCLEOTIDE SEQUENCE [GENOMIC DNA]</scope>
</reference>
<keyword id="KW-0249">Electron transport</keyword>
<keyword id="KW-0349">Heme</keyword>
<keyword id="KW-0408">Iron</keyword>
<keyword id="KW-0472">Membrane</keyword>
<keyword id="KW-0479">Metal-binding</keyword>
<keyword id="KW-0496">Mitochondrion</keyword>
<keyword id="KW-0999">Mitochondrion inner membrane</keyword>
<keyword id="KW-0679">Respiratory chain</keyword>
<keyword id="KW-0812">Transmembrane</keyword>
<keyword id="KW-1133">Transmembrane helix</keyword>
<keyword id="KW-0813">Transport</keyword>
<keyword id="KW-0830">Ubiquinone</keyword>
<proteinExistence type="inferred from homology"/>
<protein>
    <recommendedName>
        <fullName>Cytochrome b</fullName>
    </recommendedName>
    <alternativeName>
        <fullName>Complex III subunit 3</fullName>
    </alternativeName>
    <alternativeName>
        <fullName>Complex III subunit III</fullName>
    </alternativeName>
    <alternativeName>
        <fullName>Cytochrome b-c1 complex subunit 3</fullName>
    </alternativeName>
    <alternativeName>
        <fullName>Ubiquinol-cytochrome-c reductase complex cytochrome b subunit</fullName>
    </alternativeName>
</protein>
<dbReference type="EMBL" id="AF108695">
    <property type="protein sequence ID" value="AAD45477.1"/>
    <property type="molecule type" value="Genomic_DNA"/>
</dbReference>
<dbReference type="GO" id="GO:0005743">
    <property type="term" value="C:mitochondrial inner membrane"/>
    <property type="evidence" value="ECO:0007669"/>
    <property type="project" value="UniProtKB-SubCell"/>
</dbReference>
<dbReference type="GO" id="GO:0045275">
    <property type="term" value="C:respiratory chain complex III"/>
    <property type="evidence" value="ECO:0007669"/>
    <property type="project" value="InterPro"/>
</dbReference>
<dbReference type="GO" id="GO:0046872">
    <property type="term" value="F:metal ion binding"/>
    <property type="evidence" value="ECO:0007669"/>
    <property type="project" value="UniProtKB-KW"/>
</dbReference>
<dbReference type="GO" id="GO:0008121">
    <property type="term" value="F:ubiquinol-cytochrome-c reductase activity"/>
    <property type="evidence" value="ECO:0007669"/>
    <property type="project" value="InterPro"/>
</dbReference>
<dbReference type="GO" id="GO:0006122">
    <property type="term" value="P:mitochondrial electron transport, ubiquinol to cytochrome c"/>
    <property type="evidence" value="ECO:0007669"/>
    <property type="project" value="TreeGrafter"/>
</dbReference>
<dbReference type="CDD" id="cd00290">
    <property type="entry name" value="cytochrome_b_C"/>
    <property type="match status" value="1"/>
</dbReference>
<dbReference type="CDD" id="cd00284">
    <property type="entry name" value="Cytochrome_b_N"/>
    <property type="match status" value="1"/>
</dbReference>
<dbReference type="FunFam" id="1.20.810.10:FF:000002">
    <property type="entry name" value="Cytochrome b"/>
    <property type="match status" value="1"/>
</dbReference>
<dbReference type="Gene3D" id="1.20.810.10">
    <property type="entry name" value="Cytochrome Bc1 Complex, Chain C"/>
    <property type="match status" value="1"/>
</dbReference>
<dbReference type="InterPro" id="IPR005798">
    <property type="entry name" value="Cyt_b/b6_C"/>
</dbReference>
<dbReference type="InterPro" id="IPR036150">
    <property type="entry name" value="Cyt_b/b6_C_sf"/>
</dbReference>
<dbReference type="InterPro" id="IPR005797">
    <property type="entry name" value="Cyt_b/b6_N"/>
</dbReference>
<dbReference type="InterPro" id="IPR027387">
    <property type="entry name" value="Cytb/b6-like_sf"/>
</dbReference>
<dbReference type="InterPro" id="IPR030689">
    <property type="entry name" value="Cytochrome_b"/>
</dbReference>
<dbReference type="InterPro" id="IPR048260">
    <property type="entry name" value="Cytochrome_b_C_euk/bac"/>
</dbReference>
<dbReference type="InterPro" id="IPR048259">
    <property type="entry name" value="Cytochrome_b_N_euk/bac"/>
</dbReference>
<dbReference type="InterPro" id="IPR016174">
    <property type="entry name" value="Di-haem_cyt_TM"/>
</dbReference>
<dbReference type="PANTHER" id="PTHR19271">
    <property type="entry name" value="CYTOCHROME B"/>
    <property type="match status" value="1"/>
</dbReference>
<dbReference type="PANTHER" id="PTHR19271:SF16">
    <property type="entry name" value="CYTOCHROME B"/>
    <property type="match status" value="1"/>
</dbReference>
<dbReference type="Pfam" id="PF00032">
    <property type="entry name" value="Cytochrom_B_C"/>
    <property type="match status" value="1"/>
</dbReference>
<dbReference type="Pfam" id="PF00033">
    <property type="entry name" value="Cytochrome_B"/>
    <property type="match status" value="1"/>
</dbReference>
<dbReference type="PIRSF" id="PIRSF038885">
    <property type="entry name" value="COB"/>
    <property type="match status" value="1"/>
</dbReference>
<dbReference type="SUPFAM" id="SSF81648">
    <property type="entry name" value="a domain/subunit of cytochrome bc1 complex (Ubiquinol-cytochrome c reductase)"/>
    <property type="match status" value="1"/>
</dbReference>
<dbReference type="SUPFAM" id="SSF81342">
    <property type="entry name" value="Transmembrane di-heme cytochromes"/>
    <property type="match status" value="1"/>
</dbReference>
<dbReference type="PROSITE" id="PS51003">
    <property type="entry name" value="CYTB_CTER"/>
    <property type="match status" value="1"/>
</dbReference>
<dbReference type="PROSITE" id="PS51002">
    <property type="entry name" value="CYTB_NTER"/>
    <property type="match status" value="1"/>
</dbReference>
<sequence length="381" mass="42709">MTIMRKTHPLLKIVNHSFIDLPTPSNISSWWNFGSLLGICLMVQIITGLFLAMHYTSDTSTAFSSVTHICRDVNYGWLIRYIHANGASMFFICLFIHVGRGIYYGSYVLNETWNIGIILLLTTMATAFVGYVLPWGQMSFWGATVITNLLSAIPYIGTTLVEWIWGGFSVDKATLTRFFAFHFILPFIITALVLVHLLFLHETGSNNPSGLNSNSDKIPFHPYYTIKDLLGVLLLLMVLMILVLFFPDVLGDPDNYTPANPLNAPAHXXXXXXXLFAYXILRSIPXKLGXVXXLLLSILILXXXPXLNTSXXXGMTXRPXTQIIYWIFIANLLVLTWIGGQPVEXPFTTIGQIASILYFTIIIILMPIASMIENDILKLHT</sequence>
<accession>Q9XNU9</accession>
<geneLocation type="mitochondrion"/>
<feature type="chain" id="PRO_0000255106" description="Cytochrome b">
    <location>
        <begin position="1"/>
        <end position="381"/>
    </location>
</feature>
<feature type="transmembrane region" description="Helical" evidence="2">
    <location>
        <begin position="33"/>
        <end position="53"/>
    </location>
</feature>
<feature type="transmembrane region" description="Helical" evidence="2">
    <location>
        <begin position="77"/>
        <end position="98"/>
    </location>
</feature>
<feature type="transmembrane region" description="Helical" evidence="2">
    <location>
        <begin position="113"/>
        <end position="133"/>
    </location>
</feature>
<feature type="transmembrane region" description="Helical" evidence="2">
    <location>
        <begin position="178"/>
        <end position="198"/>
    </location>
</feature>
<feature type="transmembrane region" description="Helical" evidence="2">
    <location>
        <begin position="226"/>
        <end position="246"/>
    </location>
</feature>
<feature type="transmembrane region" description="Helical" evidence="2">
    <location>
        <begin position="288"/>
        <end position="308"/>
    </location>
</feature>
<feature type="transmembrane region" description="Helical" evidence="2">
    <location>
        <begin position="320"/>
        <end position="340"/>
    </location>
</feature>
<feature type="transmembrane region" description="Helical" evidence="2">
    <location>
        <begin position="347"/>
        <end position="367"/>
    </location>
</feature>
<feature type="binding site" description="axial binding residue" evidence="2">
    <location>
        <position position="83"/>
    </location>
    <ligand>
        <name>heme b</name>
        <dbReference type="ChEBI" id="CHEBI:60344"/>
        <label>b562</label>
    </ligand>
    <ligandPart>
        <name>Fe</name>
        <dbReference type="ChEBI" id="CHEBI:18248"/>
    </ligandPart>
</feature>
<feature type="binding site" description="axial binding residue" evidence="2">
    <location>
        <position position="97"/>
    </location>
    <ligand>
        <name>heme b</name>
        <dbReference type="ChEBI" id="CHEBI:60344"/>
        <label>b566</label>
    </ligand>
    <ligandPart>
        <name>Fe</name>
        <dbReference type="ChEBI" id="CHEBI:18248"/>
    </ligandPart>
</feature>
<feature type="binding site" description="axial binding residue" evidence="2">
    <location>
        <position position="182"/>
    </location>
    <ligand>
        <name>heme b</name>
        <dbReference type="ChEBI" id="CHEBI:60344"/>
        <label>b562</label>
    </ligand>
    <ligandPart>
        <name>Fe</name>
        <dbReference type="ChEBI" id="CHEBI:18248"/>
    </ligandPart>
</feature>
<feature type="binding site" description="axial binding residue" evidence="2">
    <location>
        <position position="196"/>
    </location>
    <ligand>
        <name>heme b</name>
        <dbReference type="ChEBI" id="CHEBI:60344"/>
        <label>b566</label>
    </ligand>
    <ligandPart>
        <name>Fe</name>
        <dbReference type="ChEBI" id="CHEBI:18248"/>
    </ligandPart>
</feature>
<feature type="binding site" evidence="2">
    <location>
        <position position="201"/>
    </location>
    <ligand>
        <name>a ubiquinone</name>
        <dbReference type="ChEBI" id="CHEBI:16389"/>
    </ligand>
</feature>